<feature type="chain" id="PRO_0000084531" description="Lysine acetyltransferase">
    <location>
        <begin position="1"/>
        <end position="392"/>
    </location>
</feature>
<feature type="sequence conflict" description="In Ref. 1; CAA45112." evidence="3" ref="1">
    <original>I</original>
    <variation>Y</variation>
    <location>
        <position position="275"/>
    </location>
</feature>
<keyword id="KW-0012">Acyltransferase</keyword>
<keyword id="KW-1185">Reference proteome</keyword>
<keyword id="KW-0808">Transferase</keyword>
<evidence type="ECO:0000269" key="1">
    <source>
    </source>
</evidence>
<evidence type="ECO:0000303" key="2">
    <source>
    </source>
</evidence>
<evidence type="ECO:0000305" key="3"/>
<comment type="function">
    <text evidence="1">Lysine N-6-acetyl transferase (LAT) that catalyzes the first step of the lysine degradation pathway.</text>
</comment>
<comment type="catalytic activity">
    <reaction evidence="1">
        <text>L-lysine + acetyl-CoA = N(6)-acetyl-L-lysine + CoA + H(+)</text>
        <dbReference type="Rhea" id="RHEA:69476"/>
        <dbReference type="ChEBI" id="CHEBI:15378"/>
        <dbReference type="ChEBI" id="CHEBI:32551"/>
        <dbReference type="ChEBI" id="CHEBI:57287"/>
        <dbReference type="ChEBI" id="CHEBI:57288"/>
        <dbReference type="ChEBI" id="CHEBI:58260"/>
        <dbReference type="EC" id="2.3.1.306"/>
    </reaction>
    <physiologicalReaction direction="left-to-right" evidence="1">
        <dbReference type="Rhea" id="RHEA:69477"/>
    </physiologicalReaction>
</comment>
<comment type="activity regulation">
    <text evidence="1">Activity is inhibited by 5-aminovalerate.</text>
</comment>
<comment type="pathway">
    <text evidence="1">Amino-acid degradation; L-lysine degradation via acetylation pathway; glutarate from L-lysine: step 1/6.</text>
</comment>
<comment type="sequence caution" evidence="3">
    <conflict type="frameshift">
        <sequence resource="EMBL-CDS" id="CAA45112"/>
    </conflict>
</comment>
<reference key="1">
    <citation type="journal article" date="1994" name="Curr. Genet.">
        <title>LYC1 is the structural gene for lysine N-6-acetyl transferase in yeast.</title>
        <authorList>
            <person name="Beckerich J.-M."/>
            <person name="Lambert M."/>
            <person name="Gaillardin C."/>
        </authorList>
    </citation>
    <scope>NUCLEOTIDE SEQUENCE [GENOMIC DNA]</scope>
    <scope>FUNCTION</scope>
    <scope>CATALYTIC ACTIVITY</scope>
    <scope>ACTIVITY REGULATION</scope>
    <source>
        <strain>ATCC 20460 / W29 / CBS 7504 / IFP29</strain>
    </source>
</reference>
<reference key="2">
    <citation type="journal article" date="2004" name="Nature">
        <title>Genome evolution in yeasts.</title>
        <authorList>
            <person name="Dujon B."/>
            <person name="Sherman D."/>
            <person name="Fischer G."/>
            <person name="Durrens P."/>
            <person name="Casaregola S."/>
            <person name="Lafontaine I."/>
            <person name="de Montigny J."/>
            <person name="Marck C."/>
            <person name="Neuveglise C."/>
            <person name="Talla E."/>
            <person name="Goffard N."/>
            <person name="Frangeul L."/>
            <person name="Aigle M."/>
            <person name="Anthouard V."/>
            <person name="Babour A."/>
            <person name="Barbe V."/>
            <person name="Barnay S."/>
            <person name="Blanchin S."/>
            <person name="Beckerich J.-M."/>
            <person name="Beyne E."/>
            <person name="Bleykasten C."/>
            <person name="Boisrame A."/>
            <person name="Boyer J."/>
            <person name="Cattolico L."/>
            <person name="Confanioleri F."/>
            <person name="de Daruvar A."/>
            <person name="Despons L."/>
            <person name="Fabre E."/>
            <person name="Fairhead C."/>
            <person name="Ferry-Dumazet H."/>
            <person name="Groppi A."/>
            <person name="Hantraye F."/>
            <person name="Hennequin C."/>
            <person name="Jauniaux N."/>
            <person name="Joyet P."/>
            <person name="Kachouri R."/>
            <person name="Kerrest A."/>
            <person name="Koszul R."/>
            <person name="Lemaire M."/>
            <person name="Lesur I."/>
            <person name="Ma L."/>
            <person name="Muller H."/>
            <person name="Nicaud J.-M."/>
            <person name="Nikolski M."/>
            <person name="Oztas S."/>
            <person name="Ozier-Kalogeropoulos O."/>
            <person name="Pellenz S."/>
            <person name="Potier S."/>
            <person name="Richard G.-F."/>
            <person name="Straub M.-L."/>
            <person name="Suleau A."/>
            <person name="Swennen D."/>
            <person name="Tekaia F."/>
            <person name="Wesolowski-Louvel M."/>
            <person name="Westhof E."/>
            <person name="Wirth B."/>
            <person name="Zeniou-Meyer M."/>
            <person name="Zivanovic Y."/>
            <person name="Bolotin-Fukuhara M."/>
            <person name="Thierry A."/>
            <person name="Bouchier C."/>
            <person name="Caudron B."/>
            <person name="Scarpelli C."/>
            <person name="Gaillardin C."/>
            <person name="Weissenbach J."/>
            <person name="Wincker P."/>
            <person name="Souciet J.-L."/>
        </authorList>
    </citation>
    <scope>NUCLEOTIDE SEQUENCE [LARGE SCALE GENOMIC DNA]</scope>
    <source>
        <strain>CLIB 122 / E 150</strain>
    </source>
</reference>
<name>LYC1_YARLI</name>
<gene>
    <name evidence="2" type="primary">LYC1</name>
    <name type="ordered locus">YALI0E05533g</name>
</gene>
<accession>P41929</accession>
<accession>Q6C6X3</accession>
<protein>
    <recommendedName>
        <fullName evidence="2">Lysine acetyltransferase</fullName>
        <shortName evidence="2">LAT</shortName>
        <ecNumber evidence="1">2.3.1.306</ecNumber>
    </recommendedName>
    <alternativeName>
        <fullName evidence="2">Lysine N(6)-acetyltransferase</fullName>
    </alternativeName>
</protein>
<dbReference type="EC" id="2.3.1.306" evidence="1"/>
<dbReference type="EMBL" id="X63548">
    <property type="protein sequence ID" value="CAA45112.1"/>
    <property type="status" value="ALT_FRAME"/>
    <property type="molecule type" value="Genomic_DNA"/>
</dbReference>
<dbReference type="EMBL" id="CR382131">
    <property type="protein sequence ID" value="CAG79170.1"/>
    <property type="molecule type" value="Genomic_DNA"/>
</dbReference>
<dbReference type="PIR" id="S39816">
    <property type="entry name" value="S39816"/>
</dbReference>
<dbReference type="RefSeq" id="XP_503589.1">
    <property type="nucleotide sequence ID" value="XM_503589.1"/>
</dbReference>
<dbReference type="FunCoup" id="P41929">
    <property type="interactions" value="106"/>
</dbReference>
<dbReference type="STRING" id="284591.P41929"/>
<dbReference type="EnsemblFungi" id="CAG79170">
    <property type="protein sequence ID" value="CAG79170"/>
    <property type="gene ID" value="YALI0_E05533g"/>
</dbReference>
<dbReference type="KEGG" id="yli:2911519"/>
<dbReference type="VEuPathDB" id="FungiDB:YALI0_E05533g"/>
<dbReference type="HOGENOM" id="CLU_038171_2_0_1"/>
<dbReference type="InParanoid" id="P41929"/>
<dbReference type="OMA" id="TCWILVD"/>
<dbReference type="OrthoDB" id="116292at4891"/>
<dbReference type="BioCyc" id="MetaCyc:MONOMER-8145"/>
<dbReference type="UniPathway" id="UPA00869">
    <property type="reaction ID" value="UER00841"/>
</dbReference>
<dbReference type="Proteomes" id="UP000001300">
    <property type="component" value="Chromosome E"/>
</dbReference>
<dbReference type="GO" id="GO:0004468">
    <property type="term" value="F:L-lysine N-acetyltransferase activity, acting on acetyl phosphate as donor"/>
    <property type="evidence" value="ECO:0007669"/>
    <property type="project" value="UniProtKB-EC"/>
</dbReference>
<dbReference type="GO" id="GO:0090595">
    <property type="term" value="F:L-lysine N6-acetyltransferase"/>
    <property type="evidence" value="ECO:0007669"/>
    <property type="project" value="RHEA"/>
</dbReference>
<dbReference type="GO" id="GO:0019473">
    <property type="term" value="P:L-lysine catabolic process to glutarate, by acetylation"/>
    <property type="evidence" value="ECO:0007669"/>
    <property type="project" value="UniProtKB-UniPathway"/>
</dbReference>
<dbReference type="Gene3D" id="3.40.630.30">
    <property type="match status" value="1"/>
</dbReference>
<dbReference type="InterPro" id="IPR016181">
    <property type="entry name" value="Acyl_CoA_acyltransferase"/>
</dbReference>
<dbReference type="InterPro" id="IPR055100">
    <property type="entry name" value="GNAT_LYC1-like"/>
</dbReference>
<dbReference type="InterPro" id="IPR053013">
    <property type="entry name" value="LAT"/>
</dbReference>
<dbReference type="PANTHER" id="PTHR34815">
    <property type="entry name" value="LYSINE ACETYLTRANSFERASE"/>
    <property type="match status" value="1"/>
</dbReference>
<dbReference type="PANTHER" id="PTHR34815:SF2">
    <property type="entry name" value="N-ACETYLTRANSFERASE DOMAIN-CONTAINING PROTEIN"/>
    <property type="match status" value="1"/>
</dbReference>
<dbReference type="Pfam" id="PF22998">
    <property type="entry name" value="GNAT_LYC1-like"/>
    <property type="match status" value="1"/>
</dbReference>
<dbReference type="SUPFAM" id="SSF55729">
    <property type="entry name" value="Acyl-CoA N-acyltransferases (Nat)"/>
    <property type="match status" value="1"/>
</dbReference>
<sequence length="392" mass="43935">MSLREITSPDEIRDTRSFSHLEWGAFLSIDDYNHREEIVLGHTPMCKNRLKSWGLYIEDGTRVAACETLERPALVQCKDGKIKSTSTFSIGAVFTPKEHRGKGYASVMMKQMASGIPFKPTLTDADIIKATGVSDVDQTLRVTPLWSDVGTFYEKFGWIGTTDLQYVFEVDGSASQNGVNGTPNGTNGTNGVNGHTNGTNGHSSAVKYLSEEDVYRLADVEASSFASDFEKFPFKGSYKCGIVPDRTVYEWHLARAKFLAKFAKVPEPKVFGAQIGDSWMAWHHMYNARELVILRAKLAKAEDLVELIAAAKNHLCKDGFSDQINKIILWEQEREWNHIVDGLSYDAIDQAIEKSQGKREHRGSSIPAVMFVEYKLQKDAMEFVDHGKLTWC</sequence>
<proteinExistence type="evidence at protein level"/>
<organism>
    <name type="scientific">Yarrowia lipolytica (strain CLIB 122 / E 150)</name>
    <name type="common">Yeast</name>
    <name type="synonym">Candida lipolytica</name>
    <dbReference type="NCBI Taxonomy" id="284591"/>
    <lineage>
        <taxon>Eukaryota</taxon>
        <taxon>Fungi</taxon>
        <taxon>Dikarya</taxon>
        <taxon>Ascomycota</taxon>
        <taxon>Saccharomycotina</taxon>
        <taxon>Dipodascomycetes</taxon>
        <taxon>Dipodascales</taxon>
        <taxon>Dipodascales incertae sedis</taxon>
        <taxon>Yarrowia</taxon>
    </lineage>
</organism>